<keyword id="KW-0249">Electron transport</keyword>
<keyword id="KW-0472">Membrane</keyword>
<keyword id="KW-0496">Mitochondrion</keyword>
<keyword id="KW-0999">Mitochondrion inner membrane</keyword>
<keyword id="KW-0520">NAD</keyword>
<keyword id="KW-0679">Respiratory chain</keyword>
<keyword id="KW-1278">Translocase</keyword>
<keyword id="KW-0812">Transmembrane</keyword>
<keyword id="KW-1133">Transmembrane helix</keyword>
<keyword id="KW-0813">Transport</keyword>
<keyword id="KW-0830">Ubiquinone</keyword>
<feature type="chain" id="PRO_0000118276" description="NADH-ubiquinone oxidoreductase chain 6">
    <location>
        <begin position="1"/>
        <end position="168"/>
    </location>
</feature>
<feature type="transmembrane region" description="Helical" evidence="3">
    <location>
        <begin position="1"/>
        <end position="21"/>
    </location>
</feature>
<feature type="transmembrane region" description="Helical" evidence="3">
    <location>
        <begin position="27"/>
        <end position="47"/>
    </location>
</feature>
<feature type="transmembrane region" description="Helical" evidence="3">
    <location>
        <begin position="50"/>
        <end position="70"/>
    </location>
</feature>
<feature type="transmembrane region" description="Helical" evidence="3">
    <location>
        <begin position="87"/>
        <end position="107"/>
    </location>
</feature>
<feature type="transmembrane region" description="Helical" evidence="3">
    <location>
        <begin position="143"/>
        <end position="163"/>
    </location>
</feature>
<name>NU6M_DIDVI</name>
<gene>
    <name type="primary">MT-ND6</name>
    <name type="synonym">MTND6</name>
    <name type="synonym">NADH6</name>
    <name type="synonym">ND6</name>
</gene>
<accession>P41315</accession>
<geneLocation type="mitochondrion"/>
<proteinExistence type="inferred from homology"/>
<evidence type="ECO:0000250" key="1">
    <source>
        <dbReference type="UniProtKB" id="P03923"/>
    </source>
</evidence>
<evidence type="ECO:0000250" key="2">
    <source>
        <dbReference type="UniProtKB" id="P03924"/>
    </source>
</evidence>
<evidence type="ECO:0000255" key="3"/>
<evidence type="ECO:0000305" key="4"/>
<organism>
    <name type="scientific">Didelphis virginiana</name>
    <name type="common">North American opossum</name>
    <name type="synonym">Didelphis marsupialis virginiana</name>
    <dbReference type="NCBI Taxonomy" id="9267"/>
    <lineage>
        <taxon>Eukaryota</taxon>
        <taxon>Metazoa</taxon>
        <taxon>Chordata</taxon>
        <taxon>Craniata</taxon>
        <taxon>Vertebrata</taxon>
        <taxon>Euteleostomi</taxon>
        <taxon>Mammalia</taxon>
        <taxon>Metatheria</taxon>
        <taxon>Didelphimorphia</taxon>
        <taxon>Didelphidae</taxon>
        <taxon>Didelphis</taxon>
    </lineage>
</organism>
<reference key="1">
    <citation type="journal article" date="1994" name="Genetics">
        <title>The marsupial mitochondrial genome and the evolution of placental mammals.</title>
        <authorList>
            <person name="Janke A."/>
            <person name="Feldmaier-Fuchs G."/>
            <person name="Thomas K."/>
            <person name="von Haeseler A."/>
            <person name="Paabo S."/>
        </authorList>
    </citation>
    <scope>NUCLEOTIDE SEQUENCE [GENOMIC DNA]</scope>
    <source>
        <tissue>Liver</tissue>
    </source>
</reference>
<sequence length="168" mass="18708">MKMMTIYIISLLLMIGFVAFASKPSPIYGGLSLVVSGGLGCGMVVSLEDVFLGLVVFLVYLGGMLVVFGYTTAMATEEYPETWVGNVVAFIMLLFVLLLQVGWYFMSKLVYIIMAIKLFDFVETSLVGQDYNGVSQLYYCGGWALALLGWILFMTIYVVLEVVRERSY</sequence>
<dbReference type="EC" id="7.1.1.2" evidence="1"/>
<dbReference type="EMBL" id="Z29573">
    <property type="protein sequence ID" value="CAA82688.1"/>
    <property type="molecule type" value="Genomic_DNA"/>
</dbReference>
<dbReference type="PIR" id="S47881">
    <property type="entry name" value="S47881"/>
</dbReference>
<dbReference type="RefSeq" id="NP_007106.1">
    <property type="nucleotide sequence ID" value="NC_001610.1"/>
</dbReference>
<dbReference type="SMR" id="P41315"/>
<dbReference type="GeneID" id="807774"/>
<dbReference type="CTD" id="4541"/>
<dbReference type="GO" id="GO:0005743">
    <property type="term" value="C:mitochondrial inner membrane"/>
    <property type="evidence" value="ECO:0000250"/>
    <property type="project" value="UniProtKB"/>
</dbReference>
<dbReference type="GO" id="GO:0008137">
    <property type="term" value="F:NADH dehydrogenase (ubiquinone) activity"/>
    <property type="evidence" value="ECO:0000250"/>
    <property type="project" value="UniProtKB"/>
</dbReference>
<dbReference type="GO" id="GO:0006120">
    <property type="term" value="P:mitochondrial electron transport, NADH to ubiquinone"/>
    <property type="evidence" value="ECO:0000250"/>
    <property type="project" value="UniProtKB"/>
</dbReference>
<dbReference type="GO" id="GO:0032981">
    <property type="term" value="P:mitochondrial respiratory chain complex I assembly"/>
    <property type="evidence" value="ECO:0000250"/>
    <property type="project" value="UniProtKB"/>
</dbReference>
<dbReference type="Gene3D" id="1.20.120.1200">
    <property type="entry name" value="NADH-ubiquinone/plastoquinone oxidoreductase chain 6, subunit NuoJ"/>
    <property type="match status" value="1"/>
</dbReference>
<dbReference type="InterPro" id="IPR050269">
    <property type="entry name" value="ComplexI_Subunit6"/>
</dbReference>
<dbReference type="InterPro" id="IPR001457">
    <property type="entry name" value="NADH_UbQ/plastoQ_OxRdtase_su6"/>
</dbReference>
<dbReference type="InterPro" id="IPR042106">
    <property type="entry name" value="Nuo/plastoQ_OxRdtase_6_NuoJ"/>
</dbReference>
<dbReference type="PANTHER" id="PTHR11435">
    <property type="entry name" value="NADH UBIQUINONE OXIDOREDUCTASE SUBUNIT ND6"/>
    <property type="match status" value="1"/>
</dbReference>
<dbReference type="PANTHER" id="PTHR11435:SF1">
    <property type="entry name" value="NADH-UBIQUINONE OXIDOREDUCTASE CHAIN 6"/>
    <property type="match status" value="1"/>
</dbReference>
<dbReference type="Pfam" id="PF00499">
    <property type="entry name" value="Oxidored_q3"/>
    <property type="match status" value="1"/>
</dbReference>
<comment type="function">
    <text evidence="1">Core subunit of the mitochondrial membrane respiratory chain NADH dehydrogenase (Complex I) which catalyzes electron transfer from NADH through the respiratory chain, using ubiquinone as an electron acceptor. Essential for the catalytic activity and assembly of complex I.</text>
</comment>
<comment type="catalytic activity">
    <reaction evidence="1">
        <text>a ubiquinone + NADH + 5 H(+)(in) = a ubiquinol + NAD(+) + 4 H(+)(out)</text>
        <dbReference type="Rhea" id="RHEA:29091"/>
        <dbReference type="Rhea" id="RHEA-COMP:9565"/>
        <dbReference type="Rhea" id="RHEA-COMP:9566"/>
        <dbReference type="ChEBI" id="CHEBI:15378"/>
        <dbReference type="ChEBI" id="CHEBI:16389"/>
        <dbReference type="ChEBI" id="CHEBI:17976"/>
        <dbReference type="ChEBI" id="CHEBI:57540"/>
        <dbReference type="ChEBI" id="CHEBI:57945"/>
        <dbReference type="EC" id="7.1.1.2"/>
    </reaction>
</comment>
<comment type="subunit">
    <text evidence="2">Core subunit of respiratory chain NADH dehydrogenase (Complex I) which is composed of 45 different subunits.</text>
</comment>
<comment type="subcellular location">
    <subcellularLocation>
        <location evidence="2">Mitochondrion inner membrane</location>
        <topology evidence="3">Multi-pass membrane protein</topology>
    </subcellularLocation>
</comment>
<comment type="similarity">
    <text evidence="4">Belongs to the complex I subunit 6 family.</text>
</comment>
<protein>
    <recommendedName>
        <fullName>NADH-ubiquinone oxidoreductase chain 6</fullName>
        <ecNumber evidence="1">7.1.1.2</ecNumber>
    </recommendedName>
    <alternativeName>
        <fullName>NADH dehydrogenase subunit 6</fullName>
    </alternativeName>
</protein>